<comment type="catalytic activity">
    <reaction>
        <text>agmatine + H2O = urea + putrescine</text>
        <dbReference type="Rhea" id="RHEA:13929"/>
        <dbReference type="ChEBI" id="CHEBI:15377"/>
        <dbReference type="ChEBI" id="CHEBI:16199"/>
        <dbReference type="ChEBI" id="CHEBI:58145"/>
        <dbReference type="ChEBI" id="CHEBI:326268"/>
        <dbReference type="EC" id="3.5.3.11"/>
    </reaction>
</comment>
<comment type="cofactor">
    <cofactor evidence="2">
        <name>Mn(2+)</name>
        <dbReference type="ChEBI" id="CHEBI:29035"/>
    </cofactor>
</comment>
<comment type="similarity">
    <text evidence="2">Belongs to the arginase family.</text>
</comment>
<organism>
    <name type="scientific">Schizosaccharomyces pombe (strain 972 / ATCC 24843)</name>
    <name type="common">Fission yeast</name>
    <dbReference type="NCBI Taxonomy" id="284812"/>
    <lineage>
        <taxon>Eukaryota</taxon>
        <taxon>Fungi</taxon>
        <taxon>Dikarya</taxon>
        <taxon>Ascomycota</taxon>
        <taxon>Taphrinomycotina</taxon>
        <taxon>Schizosaccharomycetes</taxon>
        <taxon>Schizosaccharomycetales</taxon>
        <taxon>Schizosaccharomycetaceae</taxon>
        <taxon>Schizosaccharomyces</taxon>
    </lineage>
</organism>
<keyword id="KW-0378">Hydrolase</keyword>
<keyword id="KW-0464">Manganese</keyword>
<keyword id="KW-0479">Metal-binding</keyword>
<keyword id="KW-1185">Reference proteome</keyword>
<keyword id="KW-0732">Signal</keyword>
<feature type="signal peptide" evidence="1">
    <location>
        <begin position="1"/>
        <end position="20"/>
    </location>
</feature>
<feature type="chain" id="PRO_0000002091" description="Putative agmatinase 1">
    <location>
        <begin position="21"/>
        <end position="394"/>
    </location>
</feature>
<feature type="binding site" evidence="2">
    <location>
        <position position="186"/>
    </location>
    <ligand>
        <name>Mn(2+)</name>
        <dbReference type="ChEBI" id="CHEBI:29035"/>
        <label>1</label>
    </ligand>
</feature>
<feature type="binding site" evidence="2">
    <location>
        <position position="209"/>
    </location>
    <ligand>
        <name>Mn(2+)</name>
        <dbReference type="ChEBI" id="CHEBI:29035"/>
        <label>1</label>
    </ligand>
</feature>
<feature type="binding site" evidence="2">
    <location>
        <position position="209"/>
    </location>
    <ligand>
        <name>Mn(2+)</name>
        <dbReference type="ChEBI" id="CHEBI:29035"/>
        <label>2</label>
    </ligand>
</feature>
<feature type="binding site" evidence="2">
    <location>
        <position position="211"/>
    </location>
    <ligand>
        <name>Mn(2+)</name>
        <dbReference type="ChEBI" id="CHEBI:29035"/>
        <label>2</label>
    </ligand>
</feature>
<feature type="binding site" evidence="2">
    <location>
        <position position="213"/>
    </location>
    <ligand>
        <name>Mn(2+)</name>
        <dbReference type="ChEBI" id="CHEBI:29035"/>
        <label>1</label>
    </ligand>
</feature>
<feature type="binding site" evidence="2">
    <location>
        <position position="307"/>
    </location>
    <ligand>
        <name>Mn(2+)</name>
        <dbReference type="ChEBI" id="CHEBI:29035"/>
        <label>1</label>
    </ligand>
</feature>
<feature type="binding site" evidence="2">
    <location>
        <position position="307"/>
    </location>
    <ligand>
        <name>Mn(2+)</name>
        <dbReference type="ChEBI" id="CHEBI:29035"/>
        <label>2</label>
    </ligand>
</feature>
<feature type="binding site" evidence="2">
    <location>
        <position position="309"/>
    </location>
    <ligand>
        <name>Mn(2+)</name>
        <dbReference type="ChEBI" id="CHEBI:29035"/>
        <label>2</label>
    </ligand>
</feature>
<protein>
    <recommendedName>
        <fullName>Putative agmatinase 1</fullName>
        <ecNumber>3.5.3.11</ecNumber>
    </recommendedName>
    <alternativeName>
        <fullName>Agmatine ureohydrolase 1</fullName>
        <shortName>AUH 1</shortName>
    </alternativeName>
</protein>
<accession>Q10088</accession>
<dbReference type="EC" id="3.5.3.11"/>
<dbReference type="EMBL" id="CU329670">
    <property type="protein sequence ID" value="CAA92310.1"/>
    <property type="molecule type" value="Genomic_DNA"/>
</dbReference>
<dbReference type="PIR" id="T37520">
    <property type="entry name" value="T37520"/>
</dbReference>
<dbReference type="RefSeq" id="NP_592806.1">
    <property type="nucleotide sequence ID" value="NM_001018206.2"/>
</dbReference>
<dbReference type="SMR" id="Q10088"/>
<dbReference type="BioGRID" id="278065">
    <property type="interactions" value="3"/>
</dbReference>
<dbReference type="FunCoup" id="Q10088">
    <property type="interactions" value="36"/>
</dbReference>
<dbReference type="STRING" id="284812.Q10088"/>
<dbReference type="PaxDb" id="4896-SPAC11D3.09.1"/>
<dbReference type="EnsemblFungi" id="SPAC11D3.09.1">
    <property type="protein sequence ID" value="SPAC11D3.09.1:pep"/>
    <property type="gene ID" value="SPAC11D3.09"/>
</dbReference>
<dbReference type="KEGG" id="spo:2541568"/>
<dbReference type="PomBase" id="SPAC11D3.09"/>
<dbReference type="VEuPathDB" id="FungiDB:SPAC11D3.09"/>
<dbReference type="eggNOG" id="KOG2964">
    <property type="taxonomic scope" value="Eukaryota"/>
</dbReference>
<dbReference type="HOGENOM" id="CLU_039478_1_1_1"/>
<dbReference type="InParanoid" id="Q10088"/>
<dbReference type="OMA" id="CIDAGFV"/>
<dbReference type="PhylomeDB" id="Q10088"/>
<dbReference type="PRO" id="PR:Q10088"/>
<dbReference type="Proteomes" id="UP000002485">
    <property type="component" value="Chromosome I"/>
</dbReference>
<dbReference type="GO" id="GO:0005783">
    <property type="term" value="C:endoplasmic reticulum"/>
    <property type="evidence" value="ECO:0007005"/>
    <property type="project" value="PomBase"/>
</dbReference>
<dbReference type="GO" id="GO:0008783">
    <property type="term" value="F:agmatinase activity"/>
    <property type="evidence" value="ECO:0000318"/>
    <property type="project" value="GO_Central"/>
</dbReference>
<dbReference type="GO" id="GO:0046872">
    <property type="term" value="F:metal ion binding"/>
    <property type="evidence" value="ECO:0007669"/>
    <property type="project" value="UniProtKB-KW"/>
</dbReference>
<dbReference type="GO" id="GO:0033389">
    <property type="term" value="P:putrescine biosynthetic process from arginine, via agmatine"/>
    <property type="evidence" value="ECO:0000318"/>
    <property type="project" value="GO_Central"/>
</dbReference>
<dbReference type="GO" id="GO:0019627">
    <property type="term" value="P:urea metabolic process"/>
    <property type="evidence" value="ECO:0000305"/>
    <property type="project" value="PomBase"/>
</dbReference>
<dbReference type="CDD" id="cd11592">
    <property type="entry name" value="Agmatinase_PAH"/>
    <property type="match status" value="1"/>
</dbReference>
<dbReference type="FunFam" id="3.40.800.10:FF:000006">
    <property type="entry name" value="Agmatinase 1"/>
    <property type="match status" value="1"/>
</dbReference>
<dbReference type="Gene3D" id="3.40.800.10">
    <property type="entry name" value="Ureohydrolase domain"/>
    <property type="match status" value="1"/>
</dbReference>
<dbReference type="InterPro" id="IPR006035">
    <property type="entry name" value="Ureohydrolase"/>
</dbReference>
<dbReference type="InterPro" id="IPR023696">
    <property type="entry name" value="Ureohydrolase_dom_sf"/>
</dbReference>
<dbReference type="InterPro" id="IPR020855">
    <property type="entry name" value="Ureohydrolase_Mn_BS"/>
</dbReference>
<dbReference type="PANTHER" id="PTHR11358:SF30">
    <property type="entry name" value="AGMATINASE 1-RELATED"/>
    <property type="match status" value="1"/>
</dbReference>
<dbReference type="PANTHER" id="PTHR11358">
    <property type="entry name" value="ARGINASE/AGMATINASE"/>
    <property type="match status" value="1"/>
</dbReference>
<dbReference type="Pfam" id="PF00491">
    <property type="entry name" value="Arginase"/>
    <property type="match status" value="1"/>
</dbReference>
<dbReference type="PIRSF" id="PIRSF036979">
    <property type="entry name" value="Arginase"/>
    <property type="match status" value="1"/>
</dbReference>
<dbReference type="PRINTS" id="PR00116">
    <property type="entry name" value="ARGINASE"/>
</dbReference>
<dbReference type="SUPFAM" id="SSF52768">
    <property type="entry name" value="Arginase/deacetylase"/>
    <property type="match status" value="1"/>
</dbReference>
<dbReference type="PROSITE" id="PS01053">
    <property type="entry name" value="ARGINASE_1"/>
    <property type="match status" value="1"/>
</dbReference>
<dbReference type="PROSITE" id="PS51409">
    <property type="entry name" value="ARGINASE_2"/>
    <property type="match status" value="1"/>
</dbReference>
<reference key="1">
    <citation type="journal article" date="2002" name="Nature">
        <title>The genome sequence of Schizosaccharomyces pombe.</title>
        <authorList>
            <person name="Wood V."/>
            <person name="Gwilliam R."/>
            <person name="Rajandream M.A."/>
            <person name="Lyne M.H."/>
            <person name="Lyne R."/>
            <person name="Stewart A."/>
            <person name="Sgouros J.G."/>
            <person name="Peat N."/>
            <person name="Hayles J."/>
            <person name="Baker S.G."/>
            <person name="Basham D."/>
            <person name="Bowman S."/>
            <person name="Brooks K."/>
            <person name="Brown D."/>
            <person name="Brown S."/>
            <person name="Chillingworth T."/>
            <person name="Churcher C.M."/>
            <person name="Collins M."/>
            <person name="Connor R."/>
            <person name="Cronin A."/>
            <person name="Davis P."/>
            <person name="Feltwell T."/>
            <person name="Fraser A."/>
            <person name="Gentles S."/>
            <person name="Goble A."/>
            <person name="Hamlin N."/>
            <person name="Harris D.E."/>
            <person name="Hidalgo J."/>
            <person name="Hodgson G."/>
            <person name="Holroyd S."/>
            <person name="Hornsby T."/>
            <person name="Howarth S."/>
            <person name="Huckle E.J."/>
            <person name="Hunt S."/>
            <person name="Jagels K."/>
            <person name="James K.D."/>
            <person name="Jones L."/>
            <person name="Jones M."/>
            <person name="Leather S."/>
            <person name="McDonald S."/>
            <person name="McLean J."/>
            <person name="Mooney P."/>
            <person name="Moule S."/>
            <person name="Mungall K.L."/>
            <person name="Murphy L.D."/>
            <person name="Niblett D."/>
            <person name="Odell C."/>
            <person name="Oliver K."/>
            <person name="O'Neil S."/>
            <person name="Pearson D."/>
            <person name="Quail M.A."/>
            <person name="Rabbinowitsch E."/>
            <person name="Rutherford K.M."/>
            <person name="Rutter S."/>
            <person name="Saunders D."/>
            <person name="Seeger K."/>
            <person name="Sharp S."/>
            <person name="Skelton J."/>
            <person name="Simmonds M.N."/>
            <person name="Squares R."/>
            <person name="Squares S."/>
            <person name="Stevens K."/>
            <person name="Taylor K."/>
            <person name="Taylor R.G."/>
            <person name="Tivey A."/>
            <person name="Walsh S.V."/>
            <person name="Warren T."/>
            <person name="Whitehead S."/>
            <person name="Woodward J.R."/>
            <person name="Volckaert G."/>
            <person name="Aert R."/>
            <person name="Robben J."/>
            <person name="Grymonprez B."/>
            <person name="Weltjens I."/>
            <person name="Vanstreels E."/>
            <person name="Rieger M."/>
            <person name="Schaefer M."/>
            <person name="Mueller-Auer S."/>
            <person name="Gabel C."/>
            <person name="Fuchs M."/>
            <person name="Duesterhoeft A."/>
            <person name="Fritzc C."/>
            <person name="Holzer E."/>
            <person name="Moestl D."/>
            <person name="Hilbert H."/>
            <person name="Borzym K."/>
            <person name="Langer I."/>
            <person name="Beck A."/>
            <person name="Lehrach H."/>
            <person name="Reinhardt R."/>
            <person name="Pohl T.M."/>
            <person name="Eger P."/>
            <person name="Zimmermann W."/>
            <person name="Wedler H."/>
            <person name="Wambutt R."/>
            <person name="Purnelle B."/>
            <person name="Goffeau A."/>
            <person name="Cadieu E."/>
            <person name="Dreano S."/>
            <person name="Gloux S."/>
            <person name="Lelaure V."/>
            <person name="Mottier S."/>
            <person name="Galibert F."/>
            <person name="Aves S.J."/>
            <person name="Xiang Z."/>
            <person name="Hunt C."/>
            <person name="Moore K."/>
            <person name="Hurst S.M."/>
            <person name="Lucas M."/>
            <person name="Rochet M."/>
            <person name="Gaillardin C."/>
            <person name="Tallada V.A."/>
            <person name="Garzon A."/>
            <person name="Thode G."/>
            <person name="Daga R.R."/>
            <person name="Cruzado L."/>
            <person name="Jimenez J."/>
            <person name="Sanchez M."/>
            <person name="del Rey F."/>
            <person name="Benito J."/>
            <person name="Dominguez A."/>
            <person name="Revuelta J.L."/>
            <person name="Moreno S."/>
            <person name="Armstrong J."/>
            <person name="Forsburg S.L."/>
            <person name="Cerutti L."/>
            <person name="Lowe T."/>
            <person name="McCombie W.R."/>
            <person name="Paulsen I."/>
            <person name="Potashkin J."/>
            <person name="Shpakovski G.V."/>
            <person name="Ussery D."/>
            <person name="Barrell B.G."/>
            <person name="Nurse P."/>
        </authorList>
    </citation>
    <scope>NUCLEOTIDE SEQUENCE [LARGE SCALE GENOMIC DNA]</scope>
    <source>
        <strain>972 / ATCC 24843</strain>
    </source>
</reference>
<name>SPEB1_SCHPO</name>
<evidence type="ECO:0000255" key="1"/>
<evidence type="ECO:0000255" key="2">
    <source>
        <dbReference type="PROSITE-ProRule" id="PRU00742"/>
    </source>
</evidence>
<sequence>MALQSLFLILLAGAAQLAQAHPKIFEQSRANAVETFDDAFPGDGETQADSVFSGIATFGRLPYWKCLNDKSQSFDIAFLGAPFDTGTSYRPGARFGPSGIREGSRRLNLYGGYNVPMETNPFNNWAKIVDCGDIPLTSYDNAVAIKQIENGHFELLTRKPTSYSEKDGYALDGSVLPRVITLGGDHTIVLPILRSVSRAYGPVSIIHFDSHLDSWKPKVFGGGKSSVGSINHGTYFYHASQEGLVSNDSNIHAGIRTTLSGLSDYDNDADCGFEIIEAREIDTIGIDAIIKRIRDRVGDGIAYLSIDIDVLDPAYAPATGTPESAGWTTRELRTILRGLDGIKLVGADIVEVAPAYDFAEVTTLAAADILFEVMSIMVKTPVYKEQAKQQSRFY</sequence>
<gene>
    <name type="ORF">SPAC11D3.09</name>
</gene>
<proteinExistence type="inferred from homology"/>